<organism>
    <name type="scientific">Wolbachia pipientis wMel</name>
    <dbReference type="NCBI Taxonomy" id="163164"/>
    <lineage>
        <taxon>Bacteria</taxon>
        <taxon>Pseudomonadati</taxon>
        <taxon>Pseudomonadota</taxon>
        <taxon>Alphaproteobacteria</taxon>
        <taxon>Rickettsiales</taxon>
        <taxon>Anaplasmataceae</taxon>
        <taxon>Wolbachieae</taxon>
        <taxon>Wolbachia</taxon>
    </lineage>
</organism>
<dbReference type="EC" id="5.6.1.7" evidence="1"/>
<dbReference type="EMBL" id="AE017196">
    <property type="protein sequence ID" value="AAS14041.1"/>
    <property type="molecule type" value="Genomic_DNA"/>
</dbReference>
<dbReference type="RefSeq" id="WP_010962503.1">
    <property type="nucleotide sequence ID" value="NZ_OX384529.1"/>
</dbReference>
<dbReference type="SMR" id="Q73I71"/>
<dbReference type="EnsemblBacteria" id="AAS14041">
    <property type="protein sequence ID" value="AAS14041"/>
    <property type="gene ID" value="WD_0307"/>
</dbReference>
<dbReference type="GeneID" id="70035799"/>
<dbReference type="KEGG" id="wol:WD_0307"/>
<dbReference type="eggNOG" id="COG0459">
    <property type="taxonomic scope" value="Bacteria"/>
</dbReference>
<dbReference type="Proteomes" id="UP000008215">
    <property type="component" value="Chromosome"/>
</dbReference>
<dbReference type="GO" id="GO:0005737">
    <property type="term" value="C:cytoplasm"/>
    <property type="evidence" value="ECO:0007669"/>
    <property type="project" value="UniProtKB-SubCell"/>
</dbReference>
<dbReference type="GO" id="GO:0005524">
    <property type="term" value="F:ATP binding"/>
    <property type="evidence" value="ECO:0007669"/>
    <property type="project" value="UniProtKB-UniRule"/>
</dbReference>
<dbReference type="GO" id="GO:0140662">
    <property type="term" value="F:ATP-dependent protein folding chaperone"/>
    <property type="evidence" value="ECO:0007669"/>
    <property type="project" value="InterPro"/>
</dbReference>
<dbReference type="GO" id="GO:0016853">
    <property type="term" value="F:isomerase activity"/>
    <property type="evidence" value="ECO:0007669"/>
    <property type="project" value="UniProtKB-KW"/>
</dbReference>
<dbReference type="GO" id="GO:0051082">
    <property type="term" value="F:unfolded protein binding"/>
    <property type="evidence" value="ECO:0007669"/>
    <property type="project" value="UniProtKB-UniRule"/>
</dbReference>
<dbReference type="GO" id="GO:0042026">
    <property type="term" value="P:protein refolding"/>
    <property type="evidence" value="ECO:0007669"/>
    <property type="project" value="UniProtKB-UniRule"/>
</dbReference>
<dbReference type="CDD" id="cd03344">
    <property type="entry name" value="GroEL"/>
    <property type="match status" value="1"/>
</dbReference>
<dbReference type="FunFam" id="3.50.7.10:FF:000001">
    <property type="entry name" value="60 kDa chaperonin"/>
    <property type="match status" value="1"/>
</dbReference>
<dbReference type="Gene3D" id="3.50.7.10">
    <property type="entry name" value="GroEL"/>
    <property type="match status" value="1"/>
</dbReference>
<dbReference type="Gene3D" id="1.10.560.10">
    <property type="entry name" value="GroEL-like equatorial domain"/>
    <property type="match status" value="1"/>
</dbReference>
<dbReference type="Gene3D" id="3.30.260.10">
    <property type="entry name" value="TCP-1-like chaperonin intermediate domain"/>
    <property type="match status" value="1"/>
</dbReference>
<dbReference type="HAMAP" id="MF_00600">
    <property type="entry name" value="CH60"/>
    <property type="match status" value="1"/>
</dbReference>
<dbReference type="InterPro" id="IPR018370">
    <property type="entry name" value="Chaperonin_Cpn60_CS"/>
</dbReference>
<dbReference type="InterPro" id="IPR001844">
    <property type="entry name" value="Cpn60/GroEL"/>
</dbReference>
<dbReference type="InterPro" id="IPR002423">
    <property type="entry name" value="Cpn60/GroEL/TCP-1"/>
</dbReference>
<dbReference type="InterPro" id="IPR027409">
    <property type="entry name" value="GroEL-like_apical_dom_sf"/>
</dbReference>
<dbReference type="InterPro" id="IPR027413">
    <property type="entry name" value="GROEL-like_equatorial_sf"/>
</dbReference>
<dbReference type="InterPro" id="IPR027410">
    <property type="entry name" value="TCP-1-like_intermed_sf"/>
</dbReference>
<dbReference type="NCBIfam" id="TIGR02348">
    <property type="entry name" value="GroEL"/>
    <property type="match status" value="1"/>
</dbReference>
<dbReference type="NCBIfam" id="NF000592">
    <property type="entry name" value="PRK00013.1"/>
    <property type="match status" value="1"/>
</dbReference>
<dbReference type="NCBIfam" id="NF009487">
    <property type="entry name" value="PRK12849.1"/>
    <property type="match status" value="1"/>
</dbReference>
<dbReference type="NCBIfam" id="NF009488">
    <property type="entry name" value="PRK12850.1"/>
    <property type="match status" value="1"/>
</dbReference>
<dbReference type="NCBIfam" id="NF009489">
    <property type="entry name" value="PRK12851.1"/>
    <property type="match status" value="1"/>
</dbReference>
<dbReference type="PANTHER" id="PTHR45633">
    <property type="entry name" value="60 KDA HEAT SHOCK PROTEIN, MITOCHONDRIAL"/>
    <property type="match status" value="1"/>
</dbReference>
<dbReference type="Pfam" id="PF00118">
    <property type="entry name" value="Cpn60_TCP1"/>
    <property type="match status" value="1"/>
</dbReference>
<dbReference type="PRINTS" id="PR00298">
    <property type="entry name" value="CHAPERONIN60"/>
</dbReference>
<dbReference type="SUPFAM" id="SSF52029">
    <property type="entry name" value="GroEL apical domain-like"/>
    <property type="match status" value="1"/>
</dbReference>
<dbReference type="SUPFAM" id="SSF48592">
    <property type="entry name" value="GroEL equatorial domain-like"/>
    <property type="match status" value="1"/>
</dbReference>
<dbReference type="SUPFAM" id="SSF54849">
    <property type="entry name" value="GroEL-intermediate domain like"/>
    <property type="match status" value="1"/>
</dbReference>
<dbReference type="PROSITE" id="PS00296">
    <property type="entry name" value="CHAPERONINS_CPN60"/>
    <property type="match status" value="1"/>
</dbReference>
<keyword id="KW-0067">ATP-binding</keyword>
<keyword id="KW-0143">Chaperone</keyword>
<keyword id="KW-0963">Cytoplasm</keyword>
<keyword id="KW-0413">Isomerase</keyword>
<keyword id="KW-0547">Nucleotide-binding</keyword>
<comment type="function">
    <text evidence="1">Together with its co-chaperonin GroES, plays an essential role in assisting protein folding. The GroEL-GroES system forms a nano-cage that allows encapsulation of the non-native substrate proteins and provides a physical environment optimized to promote and accelerate protein folding.</text>
</comment>
<comment type="catalytic activity">
    <reaction evidence="1">
        <text>ATP + H2O + a folded polypeptide = ADP + phosphate + an unfolded polypeptide.</text>
        <dbReference type="EC" id="5.6.1.7"/>
    </reaction>
</comment>
<comment type="subunit">
    <text evidence="1">Forms a cylinder of 14 subunits composed of two heptameric rings stacked back-to-back. Interacts with the co-chaperonin GroES.</text>
</comment>
<comment type="subcellular location">
    <subcellularLocation>
        <location evidence="1">Cytoplasm</location>
    </subcellularLocation>
</comment>
<comment type="similarity">
    <text evidence="1">Belongs to the chaperonin (HSP60) family.</text>
</comment>
<protein>
    <recommendedName>
        <fullName evidence="1">Chaperonin GroEL</fullName>
        <ecNumber evidence="1">5.6.1.7</ecNumber>
    </recommendedName>
    <alternativeName>
        <fullName evidence="1">60 kDa chaperonin</fullName>
    </alternativeName>
    <alternativeName>
        <fullName evidence="1">Chaperonin-60</fullName>
        <shortName evidence="1">Cpn60</shortName>
    </alternativeName>
</protein>
<accession>Q73I71</accession>
<reference key="1">
    <citation type="journal article" date="2004" name="PLoS Biol.">
        <title>Phylogenomics of the reproductive parasite Wolbachia pipientis wMel: a streamlined genome overrun by mobile genetic elements.</title>
        <authorList>
            <person name="Wu M."/>
            <person name="Sun L.V."/>
            <person name="Vamathevan J.J."/>
            <person name="Riegler M."/>
            <person name="DeBoy R.T."/>
            <person name="Brownlie J.C."/>
            <person name="McGraw E.A."/>
            <person name="Martin W."/>
            <person name="Esser C."/>
            <person name="Ahmadinejad N."/>
            <person name="Wiegand C."/>
            <person name="Madupu R."/>
            <person name="Beanan M.J."/>
            <person name="Brinkac L.M."/>
            <person name="Daugherty S.C."/>
            <person name="Durkin A.S."/>
            <person name="Kolonay J.F."/>
            <person name="Nelson W.C."/>
            <person name="Mohamoud Y."/>
            <person name="Lee P."/>
            <person name="Berry K.J."/>
            <person name="Young M.B."/>
            <person name="Utterback T.R."/>
            <person name="Weidman J.F."/>
            <person name="Nierman W.C."/>
            <person name="Paulsen I.T."/>
            <person name="Nelson K.E."/>
            <person name="Tettelin H."/>
            <person name="O'Neill S.L."/>
            <person name="Eisen J.A."/>
        </authorList>
    </citation>
    <scope>NUCLEOTIDE SEQUENCE [LARGE SCALE GENOMIC DNA]</scope>
</reference>
<name>CH60_WOLPM</name>
<proteinExistence type="inferred from homology"/>
<sequence length="549" mass="58662">MTNVVVSGEQLQEAFREVAAIVDSTVAITAGPRGKTVGINKPYGAPEITKDGYKVMKGIKPEKPLNAAIASIFAQSCSQCNDKVGDGTTTCSILTSNMIMEASKSIAAGNDRVGIKNGIQKAKDVILKEIASMSRTISLEKIDEVAQVAIISANGDKDIGNSIADSVKKVGKEGVITVEESKGSKELEVELTTGMQFDRGYLSPYFITNNEKMIVELDNPYLLITEKKLNIIQPLLPILEAIVKSGKPLVIIAEDIEGEALSTLVINKLRGGLKVAAVKAPGFGDRRKEMLEDIATLTGAKYVIKDELGIKMEDLTLDDLGTAKNVKITKDNTTVVSENSDSDSVKARIEQIKSQIETSTSDYDKEKLRERLAKLSGGVAVLKVGGATEVEVKERRDRVEDALHATRAAIEEGIVPGGGVALLYASSVLDKLKGASDEEQIGINIIKKVLSAPIRRLVKNAGLESAVIIDYLIKQNDKELIYNVEAMNYANAFTAGVIDPAKVVRIAFETAVSVASVLITTESMIVDVPSKENASSPMGAGEMSGMGGF</sequence>
<gene>
    <name evidence="1" type="primary">groEL</name>
    <name evidence="1" type="synonym">groL</name>
    <name type="ordered locus">WD_0307</name>
</gene>
<feature type="chain" id="PRO_0000063603" description="Chaperonin GroEL">
    <location>
        <begin position="1"/>
        <end position="549"/>
    </location>
</feature>
<feature type="binding site" evidence="1">
    <location>
        <begin position="29"/>
        <end position="32"/>
    </location>
    <ligand>
        <name>ATP</name>
        <dbReference type="ChEBI" id="CHEBI:30616"/>
    </ligand>
</feature>
<feature type="binding site" evidence="1">
    <location>
        <position position="50"/>
    </location>
    <ligand>
        <name>ATP</name>
        <dbReference type="ChEBI" id="CHEBI:30616"/>
    </ligand>
</feature>
<feature type="binding site" evidence="1">
    <location>
        <begin position="86"/>
        <end position="90"/>
    </location>
    <ligand>
        <name>ATP</name>
        <dbReference type="ChEBI" id="CHEBI:30616"/>
    </ligand>
</feature>
<feature type="binding site" evidence="1">
    <location>
        <position position="418"/>
    </location>
    <ligand>
        <name>ATP</name>
        <dbReference type="ChEBI" id="CHEBI:30616"/>
    </ligand>
</feature>
<feature type="binding site" evidence="1">
    <location>
        <position position="499"/>
    </location>
    <ligand>
        <name>ATP</name>
        <dbReference type="ChEBI" id="CHEBI:30616"/>
    </ligand>
</feature>
<evidence type="ECO:0000255" key="1">
    <source>
        <dbReference type="HAMAP-Rule" id="MF_00600"/>
    </source>
</evidence>